<gene>
    <name evidence="1" type="primary">cofD</name>
    <name type="ordered locus">rrnAC0051</name>
</gene>
<accession>Q5V5R9</accession>
<comment type="function">
    <text evidence="1">Catalyzes the transfer of the 2-phospholactate moiety from (2S)-lactyl-2-diphospho-5'-guanosine to 7,8-didemethyl-8-hydroxy-5-deazariboflavin (FO) with the formation of oxidized coenzyme F420-0 and GMP.</text>
</comment>
<comment type="catalytic activity">
    <reaction evidence="1">
        <text>(2S)-lactyl-2-diphospho-5'-guanosine + 7,8-didemethyl-8-hydroxy-5-deazariboflavin = oxidized coenzyme F420-0 + GMP + H(+)</text>
        <dbReference type="Rhea" id="RHEA:63444"/>
        <dbReference type="ChEBI" id="CHEBI:15378"/>
        <dbReference type="ChEBI" id="CHEBI:58115"/>
        <dbReference type="ChEBI" id="CHEBI:59435"/>
        <dbReference type="ChEBI" id="CHEBI:59904"/>
        <dbReference type="ChEBI" id="CHEBI:59907"/>
        <dbReference type="EC" id="2.7.8.28"/>
    </reaction>
</comment>
<comment type="cofactor">
    <cofactor evidence="1">
        <name>Mg(2+)</name>
        <dbReference type="ChEBI" id="CHEBI:18420"/>
    </cofactor>
</comment>
<comment type="pathway">
    <text evidence="1">Cofactor biosynthesis; coenzyme F420 biosynthesis.</text>
</comment>
<comment type="subunit">
    <text evidence="1">Homodimer.</text>
</comment>
<comment type="similarity">
    <text evidence="1">Belongs to the CofD family.</text>
</comment>
<dbReference type="EC" id="2.7.8.28" evidence="1"/>
<dbReference type="EMBL" id="AY596297">
    <property type="protein sequence ID" value="AAV45133.1"/>
    <property type="molecule type" value="Genomic_DNA"/>
</dbReference>
<dbReference type="RefSeq" id="WP_007188235.1">
    <property type="nucleotide sequence ID" value="NZ_CP039138.1"/>
</dbReference>
<dbReference type="SMR" id="Q5V5R9"/>
<dbReference type="STRING" id="272569.rrnAC0051"/>
<dbReference type="PaxDb" id="272569-rrnAC0051"/>
<dbReference type="EnsemblBacteria" id="AAV45133">
    <property type="protein sequence ID" value="AAV45133"/>
    <property type="gene ID" value="rrnAC0051"/>
</dbReference>
<dbReference type="GeneID" id="40154366"/>
<dbReference type="KEGG" id="hma:rrnAC0051"/>
<dbReference type="PATRIC" id="fig|272569.17.peg.861"/>
<dbReference type="eggNOG" id="arCOG04395">
    <property type="taxonomic scope" value="Archaea"/>
</dbReference>
<dbReference type="HOGENOM" id="CLU_055795_1_0_2"/>
<dbReference type="UniPathway" id="UPA00071"/>
<dbReference type="Proteomes" id="UP000001169">
    <property type="component" value="Chromosome I"/>
</dbReference>
<dbReference type="GO" id="GO:0043743">
    <property type="term" value="F:LPPG:FO 2-phospho-L-lactate transferase activity"/>
    <property type="evidence" value="ECO:0007669"/>
    <property type="project" value="UniProtKB-EC"/>
</dbReference>
<dbReference type="GO" id="GO:0000287">
    <property type="term" value="F:magnesium ion binding"/>
    <property type="evidence" value="ECO:0007669"/>
    <property type="project" value="InterPro"/>
</dbReference>
<dbReference type="GO" id="GO:0052645">
    <property type="term" value="P:F420-0 metabolic process"/>
    <property type="evidence" value="ECO:0007669"/>
    <property type="project" value="UniProtKB-UniRule"/>
</dbReference>
<dbReference type="Gene3D" id="3.40.50.10680">
    <property type="entry name" value="CofD-like domains"/>
    <property type="match status" value="2"/>
</dbReference>
<dbReference type="HAMAP" id="MF_01257">
    <property type="entry name" value="CofD"/>
    <property type="match status" value="1"/>
</dbReference>
<dbReference type="InterPro" id="IPR002882">
    <property type="entry name" value="CofD"/>
</dbReference>
<dbReference type="InterPro" id="IPR038136">
    <property type="entry name" value="CofD-like_dom_sf"/>
</dbReference>
<dbReference type="InterPro" id="IPR010115">
    <property type="entry name" value="FbiA/CofD"/>
</dbReference>
<dbReference type="NCBIfam" id="TIGR01819">
    <property type="entry name" value="F420_cofD"/>
    <property type="match status" value="1"/>
</dbReference>
<dbReference type="PANTHER" id="PTHR43007">
    <property type="entry name" value="2-PHOSPHO-L-LACTATE TRANSFERASE"/>
    <property type="match status" value="1"/>
</dbReference>
<dbReference type="PANTHER" id="PTHR43007:SF1">
    <property type="entry name" value="2-PHOSPHO-L-LACTATE TRANSFERASE"/>
    <property type="match status" value="1"/>
</dbReference>
<dbReference type="Pfam" id="PF01933">
    <property type="entry name" value="CofD"/>
    <property type="match status" value="1"/>
</dbReference>
<dbReference type="SUPFAM" id="SSF142338">
    <property type="entry name" value="CofD-like"/>
    <property type="match status" value="1"/>
</dbReference>
<sequence>MVTFLAGGTGTPKLLAGADDVFSPAATTVVANTGDDIELGGHLVCPDLDTVLFLDGEVLDRETWWGIADDTAETHTELTRLADAAGLDGGPRYLPDDAQTAGRDIARWRRFSGVAEFMHIGDRDRAVHVTRTSLLDEGRSLTAVTRTLADAFGLERTLLPMSDDPVASIIHTPSGPMHFQEWWVGRNGEPPVEDVEFRGAERASATDAVLTALDDTVVIGPSNPVTSLGPMLAIDDIQRALHETTVVAVSPFIEDTVFSGPAADLMAGVGLEPSTAGVAEAYPFADSFVLDEEDSTPLDVPVVRTDTTLNDAADAERVNRAVETALSEVA</sequence>
<name>COFD_HALMA</name>
<keyword id="KW-0460">Magnesium</keyword>
<keyword id="KW-1185">Reference proteome</keyword>
<keyword id="KW-0808">Transferase</keyword>
<feature type="chain" id="PRO_0000145769" description="2-phospho-L-lactate transferase">
    <location>
        <begin position="1"/>
        <end position="330"/>
    </location>
</feature>
<feature type="binding site" evidence="1">
    <location>
        <position position="49"/>
    </location>
    <ligand>
        <name>7,8-didemethyl-8-hydroxy-5-deazariboflavin</name>
        <dbReference type="ChEBI" id="CHEBI:59904"/>
    </ligand>
</feature>
<organism>
    <name type="scientific">Haloarcula marismortui (strain ATCC 43049 / DSM 3752 / JCM 8966 / VKM B-1809)</name>
    <name type="common">Halobacterium marismortui</name>
    <dbReference type="NCBI Taxonomy" id="272569"/>
    <lineage>
        <taxon>Archaea</taxon>
        <taxon>Methanobacteriati</taxon>
        <taxon>Methanobacteriota</taxon>
        <taxon>Stenosarchaea group</taxon>
        <taxon>Halobacteria</taxon>
        <taxon>Halobacteriales</taxon>
        <taxon>Haloarculaceae</taxon>
        <taxon>Haloarcula</taxon>
    </lineage>
</organism>
<reference key="1">
    <citation type="journal article" date="2004" name="Genome Res.">
        <title>Genome sequence of Haloarcula marismortui: a halophilic archaeon from the Dead Sea.</title>
        <authorList>
            <person name="Baliga N.S."/>
            <person name="Bonneau R."/>
            <person name="Facciotti M.T."/>
            <person name="Pan M."/>
            <person name="Glusman G."/>
            <person name="Deutsch E.W."/>
            <person name="Shannon P."/>
            <person name="Chiu Y."/>
            <person name="Weng R.S."/>
            <person name="Gan R.R."/>
            <person name="Hung P."/>
            <person name="Date S.V."/>
            <person name="Marcotte E."/>
            <person name="Hood L."/>
            <person name="Ng W.V."/>
        </authorList>
    </citation>
    <scope>NUCLEOTIDE SEQUENCE [LARGE SCALE GENOMIC DNA]</scope>
    <source>
        <strain>ATCC 43049 / DSM 3752 / JCM 8966 / VKM B-1809</strain>
    </source>
</reference>
<proteinExistence type="inferred from homology"/>
<evidence type="ECO:0000255" key="1">
    <source>
        <dbReference type="HAMAP-Rule" id="MF_01257"/>
    </source>
</evidence>
<protein>
    <recommendedName>
        <fullName evidence="1">2-phospho-L-lactate transferase</fullName>
        <ecNumber evidence="1">2.7.8.28</ecNumber>
    </recommendedName>
</protein>